<organism>
    <name type="scientific">Histophilus somni (strain 2336)</name>
    <name type="common">Haemophilus somnus</name>
    <dbReference type="NCBI Taxonomy" id="228400"/>
    <lineage>
        <taxon>Bacteria</taxon>
        <taxon>Pseudomonadati</taxon>
        <taxon>Pseudomonadota</taxon>
        <taxon>Gammaproteobacteria</taxon>
        <taxon>Pasteurellales</taxon>
        <taxon>Pasteurellaceae</taxon>
        <taxon>Histophilus</taxon>
    </lineage>
</organism>
<evidence type="ECO:0000255" key="1">
    <source>
        <dbReference type="HAMAP-Rule" id="MF_00765"/>
    </source>
</evidence>
<dbReference type="EMBL" id="CP000947">
    <property type="protein sequence ID" value="ACA31919.1"/>
    <property type="molecule type" value="Genomic_DNA"/>
</dbReference>
<dbReference type="RefSeq" id="WP_012341156.1">
    <property type="nucleotide sequence ID" value="NC_010519.1"/>
</dbReference>
<dbReference type="SMR" id="B0UW94"/>
<dbReference type="STRING" id="228400.HSM_0289"/>
<dbReference type="GeneID" id="31486571"/>
<dbReference type="KEGG" id="hsm:HSM_0289"/>
<dbReference type="HOGENOM" id="CLU_106757_2_0_6"/>
<dbReference type="GO" id="GO:0005829">
    <property type="term" value="C:cytosol"/>
    <property type="evidence" value="ECO:0007669"/>
    <property type="project" value="TreeGrafter"/>
</dbReference>
<dbReference type="GO" id="GO:0043022">
    <property type="term" value="F:ribosome binding"/>
    <property type="evidence" value="ECO:0007669"/>
    <property type="project" value="UniProtKB-UniRule"/>
</dbReference>
<dbReference type="GO" id="GO:0019843">
    <property type="term" value="F:rRNA binding"/>
    <property type="evidence" value="ECO:0007669"/>
    <property type="project" value="UniProtKB-UniRule"/>
</dbReference>
<dbReference type="GO" id="GO:1902626">
    <property type="term" value="P:assembly of large subunit precursor of preribosome"/>
    <property type="evidence" value="ECO:0007669"/>
    <property type="project" value="UniProtKB-UniRule"/>
</dbReference>
<dbReference type="CDD" id="cd16331">
    <property type="entry name" value="YjgA-like"/>
    <property type="match status" value="1"/>
</dbReference>
<dbReference type="FunFam" id="1.10.60.30:FF:000002">
    <property type="entry name" value="UPF0307 protein YjgA"/>
    <property type="match status" value="1"/>
</dbReference>
<dbReference type="Gene3D" id="1.10.60.30">
    <property type="entry name" value="PSPTO4464-like domains"/>
    <property type="match status" value="2"/>
</dbReference>
<dbReference type="HAMAP" id="MF_00765">
    <property type="entry name" value="DarP"/>
    <property type="match status" value="1"/>
</dbReference>
<dbReference type="InterPro" id="IPR006839">
    <property type="entry name" value="DarP"/>
</dbReference>
<dbReference type="InterPro" id="IPR023153">
    <property type="entry name" value="DarP_sf"/>
</dbReference>
<dbReference type="NCBIfam" id="NF003593">
    <property type="entry name" value="PRK05255.1-1"/>
    <property type="match status" value="1"/>
</dbReference>
<dbReference type="PANTHER" id="PTHR38101">
    <property type="entry name" value="UPF0307 PROTEIN YJGA"/>
    <property type="match status" value="1"/>
</dbReference>
<dbReference type="PANTHER" id="PTHR38101:SF1">
    <property type="entry name" value="UPF0307 PROTEIN YJGA"/>
    <property type="match status" value="1"/>
</dbReference>
<dbReference type="Pfam" id="PF04751">
    <property type="entry name" value="DarP"/>
    <property type="match status" value="1"/>
</dbReference>
<dbReference type="PIRSF" id="PIRSF016183">
    <property type="entry name" value="UCP016183"/>
    <property type="match status" value="1"/>
</dbReference>
<dbReference type="SUPFAM" id="SSF158710">
    <property type="entry name" value="PSPTO4464-like"/>
    <property type="match status" value="1"/>
</dbReference>
<protein>
    <recommendedName>
        <fullName evidence="1">Dual-action ribosomal maturation protein DarP</fullName>
    </recommendedName>
    <alternativeName>
        <fullName evidence="1">Large ribosomal subunit assembly factor DarP</fullName>
    </alternativeName>
</protein>
<comment type="function">
    <text evidence="1">Member of a network of 50S ribosomal subunit biogenesis factors which assembles along the 30S-50S interface, preventing incorrect 23S rRNA structures from forming. Promotes peptidyl transferase center (PTC) maturation.</text>
</comment>
<comment type="subcellular location">
    <subcellularLocation>
        <location evidence="1">Cytoplasm</location>
    </subcellularLocation>
    <text evidence="1">Associates with late stage pre-50S ribosomal subunits.</text>
</comment>
<comment type="similarity">
    <text evidence="1">Belongs to the DarP family.</text>
</comment>
<proteinExistence type="inferred from homology"/>
<accession>B0UW94</accession>
<gene>
    <name evidence="1" type="primary">darP</name>
    <name type="ordered locus">HSM_0289</name>
</gene>
<feature type="chain" id="PRO_1000198387" description="Dual-action ribosomal maturation protein DarP">
    <location>
        <begin position="1"/>
        <end position="177"/>
    </location>
</feature>
<name>DARP_HISS2</name>
<sequence>MAKCKEEVFNWEDEEQEEIIWVSKSEIKRDAEALKKLGEKLVNLTKTNLDKIPLDTGLRDAVELAQRLQKEALRRQIQYIGKLLRAIDPEPIQEALNKIENKHQQQQAKLHKLELLRDELVQKGNSAFTELLIQYPHADRQHLHNLIRSAQKEREQNKPPKSYREIFQYLKDLILED</sequence>
<keyword id="KW-0963">Cytoplasm</keyword>
<keyword id="KW-0690">Ribosome biogenesis</keyword>
<keyword id="KW-0694">RNA-binding</keyword>
<keyword id="KW-0699">rRNA-binding</keyword>
<reference key="1">
    <citation type="submission" date="2008-02" db="EMBL/GenBank/DDBJ databases">
        <title>Complete sequence of Haemophilus somnus 2336.</title>
        <authorList>
            <consortium name="US DOE Joint Genome Institute"/>
            <person name="Siddaramappa S."/>
            <person name="Duncan A.J."/>
            <person name="Challacombe J.F."/>
            <person name="Rainey D."/>
            <person name="Gillaspy A.F."/>
            <person name="Carson M."/>
            <person name="Gipson J."/>
            <person name="Gipson M."/>
            <person name="Bruce D."/>
            <person name="Detter J.C."/>
            <person name="Han C.S."/>
            <person name="Land M."/>
            <person name="Tapia R."/>
            <person name="Thompson L.S."/>
            <person name="Orvis J."/>
            <person name="Zaitshik J."/>
            <person name="Barnes G."/>
            <person name="Brettin T.S."/>
            <person name="Dyer D.W."/>
            <person name="Inzana T.J."/>
        </authorList>
    </citation>
    <scope>NUCLEOTIDE SEQUENCE [LARGE SCALE GENOMIC DNA]</scope>
    <source>
        <strain>2336</strain>
    </source>
</reference>